<keyword id="KW-0025">Alternative splicing</keyword>
<keyword id="KW-1015">Disulfide bond</keyword>
<keyword id="KW-0325">Glycoprotein</keyword>
<keyword id="KW-1032">Host cell membrane</keyword>
<keyword id="KW-1043">Host membrane</keyword>
<keyword id="KW-0945">Host-virus interaction</keyword>
<keyword id="KW-0375">Hydrogen ion transport</keyword>
<keyword id="KW-1083">Inhibition of host autophagy by virus</keyword>
<keyword id="KW-0407">Ion channel</keyword>
<keyword id="KW-0406">Ion transport</keyword>
<keyword id="KW-0449">Lipoprotein</keyword>
<keyword id="KW-0472">Membrane</keyword>
<keyword id="KW-0564">Palmitate</keyword>
<keyword id="KW-0597">Phosphoprotein</keyword>
<keyword id="KW-0735">Signal-anchor</keyword>
<keyword id="KW-0812">Transmembrane</keyword>
<keyword id="KW-1133">Transmembrane helix</keyword>
<keyword id="KW-0813">Transport</keyword>
<keyword id="KW-1182">Viral ion channel</keyword>
<keyword id="KW-0946">Virion</keyword>
<accession>Q9IQ49</accession>
<accession>Q0PDM3</accession>
<protein>
    <recommendedName>
        <fullName evidence="1">Matrix protein 2</fullName>
    </recommendedName>
    <alternativeName>
        <fullName evidence="1">Proton channel protein M2</fullName>
    </alternativeName>
</protein>
<evidence type="ECO:0000255" key="1">
    <source>
        <dbReference type="HAMAP-Rule" id="MF_04069"/>
    </source>
</evidence>
<evidence type="ECO:0000256" key="2">
    <source>
        <dbReference type="SAM" id="MobiDB-lite"/>
    </source>
</evidence>
<sequence>MSFLTEVETPIRNEWGCRCNGSSDPLTIAANIIGILHLTLWMLDRLFFKCIYRRFKYGLKGGPSTEGVPKSMREEYRKEQQSAVDTDDGHFVSIELE</sequence>
<organism>
    <name type="scientific">Influenza A virus (strain A/X-31 H3N2)</name>
    <dbReference type="NCBI Taxonomy" id="132504"/>
    <lineage>
        <taxon>Viruses</taxon>
        <taxon>Riboviria</taxon>
        <taxon>Orthornavirae</taxon>
        <taxon>Negarnaviricota</taxon>
        <taxon>Polyploviricotina</taxon>
        <taxon>Insthoviricetes</taxon>
        <taxon>Articulavirales</taxon>
        <taxon>Orthomyxoviridae</taxon>
        <taxon>Alphainfluenzavirus</taxon>
        <taxon>Alphainfluenzavirus influenzae</taxon>
        <taxon>Influenza A virus</taxon>
    </lineage>
</organism>
<reference key="1">
    <citation type="submission" date="2000-01" db="EMBL/GenBank/DDBJ databases">
        <authorList>
            <person name="Seong B."/>
            <person name="Lee K."/>
        </authorList>
    </citation>
    <scope>NUCLEOTIDE SEQUENCE [GENOMIC RNA]</scope>
</reference>
<reference key="2">
    <citation type="submission" date="2006-08" db="EMBL/GenBank/DDBJ databases">
        <title>Identification of mutations in the cold-adapted X-31 ca influenza vaccine strain.</title>
        <authorList>
            <person name="Lee K.-H."/>
            <person name="Kim Y.H."/>
            <person name="Ha S.-H."/>
            <person name="Kim H.A."/>
            <person name="Seo S.-U."/>
            <person name="Seong B.L."/>
        </authorList>
    </citation>
    <scope>NUCLEOTIDE SEQUENCE [GENOMIC RNA]</scope>
</reference>
<comment type="function">
    <text evidence="1">Forms a proton-selective ion channel that is necessary for the efficient release of the viral genome during virus entry. After attaching to the cell surface, the virion enters the cell by endocytosis. Acidification of the endosome triggers M2 ion channel activity. The influx of protons into virion interior is believed to disrupt interactions between the viral ribonucleoprotein (RNP), matrix protein 1 (M1), and lipid bilayers, thereby freeing the viral genome from interaction with viral proteins and enabling RNA segments to migrate to the host cell nucleus, where influenza virus RNA transcription and replication occur. Also plays a role in viral proteins secretory pathway. Elevates the intravesicular pH of normally acidic compartments, such as trans-Golgi network, preventing newly formed hemagglutinin from premature switching to the fusion-active conformation.</text>
</comment>
<comment type="activity regulation">
    <text>The M2 protein from most influenza A strains is inhibited by amantadine and rimantadine, resulting in viral uncoating incapacity. Emergence of amantadine-resistant variants is usually rapid.</text>
</comment>
<comment type="subunit">
    <text evidence="1">Homotetramer; composed of two disulfide-linked dimers held together by non-covalent interactions. May interact with matrix protein 1.</text>
</comment>
<comment type="subcellular location">
    <subcellularLocation>
        <location evidence="1">Virion membrane</location>
    </subcellularLocation>
    <subcellularLocation>
        <location evidence="1">Host apical cell membrane</location>
        <topology evidence="1">Single-pass type III membrane protein</topology>
    </subcellularLocation>
    <text evidence="1">Abundantly expressed at the apical plasma membrane in infected polarized epithelial cells, in close proximity to budding and assembled virions. Minor component of virions (only 16-20 molecules/virion).</text>
</comment>
<comment type="alternative products">
    <event type="alternative splicing"/>
    <isoform>
        <id>Q9IQ49-1</id>
        <name>M2</name>
        <sequence type="displayed"/>
    </isoform>
    <isoform>
        <id>Q9IQ48-1</id>
        <name>M1</name>
        <sequence type="external"/>
    </isoform>
    <text>Only the first 9 residues are shared by the 2 isoforms.</text>
</comment>
<comment type="domain">
    <text evidence="1">Cytoplasmic tail plays an important role in virion assembly and morphogenesis.</text>
</comment>
<comment type="miscellaneous">
    <text evidence="1">When the channel is activated, one or more imidazole moieties of His-37 probably become bi-protonated.</text>
</comment>
<comment type="similarity">
    <text evidence="1">Belongs to the influenza viruses matrix protein M2 family.</text>
</comment>
<gene>
    <name evidence="1" type="primary">M</name>
</gene>
<proteinExistence type="inferred from homology"/>
<dbReference type="EMBL" id="AB036778">
    <property type="protein sequence ID" value="BAA99398.1"/>
    <property type="molecule type" value="Genomic_RNA"/>
</dbReference>
<dbReference type="EMBL" id="DQ874879">
    <property type="protein sequence ID" value="ABH05856.1"/>
    <property type="molecule type" value="Genomic_RNA"/>
</dbReference>
<dbReference type="SMR" id="Q9IQ49"/>
<dbReference type="GlyCosmos" id="Q9IQ49">
    <property type="glycosylation" value="1 site, No reported glycans"/>
</dbReference>
<dbReference type="GO" id="GO:0020002">
    <property type="term" value="C:host cell plasma membrane"/>
    <property type="evidence" value="ECO:0007669"/>
    <property type="project" value="UniProtKB-SubCell"/>
</dbReference>
<dbReference type="GO" id="GO:0016020">
    <property type="term" value="C:membrane"/>
    <property type="evidence" value="ECO:0007669"/>
    <property type="project" value="UniProtKB-UniRule"/>
</dbReference>
<dbReference type="GO" id="GO:0055036">
    <property type="term" value="C:virion membrane"/>
    <property type="evidence" value="ECO:0007669"/>
    <property type="project" value="UniProtKB-SubCell"/>
</dbReference>
<dbReference type="GO" id="GO:0005216">
    <property type="term" value="F:monoatomic ion channel activity"/>
    <property type="evidence" value="ECO:0007669"/>
    <property type="project" value="UniProtKB-UniRule"/>
</dbReference>
<dbReference type="GO" id="GO:0015078">
    <property type="term" value="F:proton transmembrane transporter activity"/>
    <property type="evidence" value="ECO:0007669"/>
    <property type="project" value="UniProtKB-UniRule"/>
</dbReference>
<dbReference type="GO" id="GO:0051259">
    <property type="term" value="P:protein complex oligomerization"/>
    <property type="evidence" value="ECO:0007669"/>
    <property type="project" value="UniProtKB-UniRule"/>
</dbReference>
<dbReference type="GO" id="GO:0044694">
    <property type="term" value="P:symbiont genome entry into host cell via pore formation in plasma membrane"/>
    <property type="evidence" value="ECO:0007669"/>
    <property type="project" value="UniProtKB-UniRule"/>
</dbReference>
<dbReference type="GO" id="GO:0140321">
    <property type="term" value="P:symbiont-mediated suppression of host autophagy"/>
    <property type="evidence" value="ECO:0007669"/>
    <property type="project" value="UniProtKB-KW"/>
</dbReference>
<dbReference type="Gene3D" id="6.10.250.1640">
    <property type="match status" value="1"/>
</dbReference>
<dbReference type="HAMAP" id="MF_04069">
    <property type="entry name" value="INFV_M2"/>
    <property type="match status" value="1"/>
</dbReference>
<dbReference type="InterPro" id="IPR002089">
    <property type="entry name" value="Flu_M2"/>
</dbReference>
<dbReference type="Pfam" id="PF00599">
    <property type="entry name" value="Flu_M2"/>
    <property type="match status" value="1"/>
</dbReference>
<feature type="chain" id="PRO_0000326334" description="Matrix protein 2">
    <location>
        <begin position="1"/>
        <end position="97"/>
    </location>
</feature>
<feature type="topological domain" description="Virion surface" evidence="1">
    <location>
        <begin position="1"/>
        <end position="22"/>
    </location>
</feature>
<feature type="transmembrane region" description="Helical; Signal-anchor for type III membrane protein" evidence="1">
    <location>
        <begin position="23"/>
        <end position="43"/>
    </location>
</feature>
<feature type="topological domain" description="Intravirion" evidence="1">
    <location>
        <begin position="44"/>
        <end position="97"/>
    </location>
</feature>
<feature type="region of interest" description="Disordered" evidence="2">
    <location>
        <begin position="59"/>
        <end position="97"/>
    </location>
</feature>
<feature type="compositionally biased region" description="Basic and acidic residues" evidence="2">
    <location>
        <begin position="71"/>
        <end position="80"/>
    </location>
</feature>
<feature type="site" description="Essential for channel activity, possibly by being protonated during channel activation, and by forming the channel gate and the selective filter" evidence="1">
    <location>
        <position position="37"/>
    </location>
</feature>
<feature type="site" description="Seems to be involved in pH gating" evidence="1">
    <location>
        <position position="41"/>
    </location>
</feature>
<feature type="modified residue" description="Phosphoserine; by host" evidence="1">
    <location>
        <position position="64"/>
    </location>
</feature>
<feature type="modified residue" description="Phosphoserine; by host" evidence="1">
    <location>
        <position position="82"/>
    </location>
</feature>
<feature type="modified residue" description="Phosphoserine; by host" evidence="1">
    <location>
        <position position="93"/>
    </location>
</feature>
<feature type="lipid moiety-binding region" description="S-palmitoyl cysteine; by host" evidence="1">
    <location>
        <position position="50"/>
    </location>
</feature>
<feature type="glycosylation site" description="N-linked (GlcNAc...) asparagine; by host" evidence="1">
    <location>
        <position position="20"/>
    </location>
</feature>
<feature type="disulfide bond" description="Interchain (with C-17)" evidence="1">
    <location>
        <position position="17"/>
    </location>
</feature>
<feature type="disulfide bond" description="Interchain (with C-19)" evidence="1">
    <location>
        <position position="19"/>
    </location>
</feature>
<feature type="sequence conflict" description="In Ref. 2; ABH05856." ref="2">
    <original>F</original>
    <variation>L</variation>
    <location>
        <position position="3"/>
    </location>
</feature>
<feature type="sequence conflict" description="In Ref. 2; ABH05856." ref="2">
    <original>M</original>
    <variation>I</variation>
    <location>
        <position position="42"/>
    </location>
</feature>
<feature type="sequence conflict" description="In Ref. 2; ABH05856." ref="2">
    <original>T</original>
    <variation>A</variation>
    <location>
        <position position="86"/>
    </location>
</feature>
<name>M2_I000X</name>
<organismHost>
    <name type="scientific">Aves</name>
    <dbReference type="NCBI Taxonomy" id="8782"/>
</organismHost>
<organismHost>
    <name type="scientific">Cetacea</name>
    <name type="common">whales</name>
    <dbReference type="NCBI Taxonomy" id="9721"/>
</organismHost>
<organismHost>
    <name type="scientific">Homo sapiens</name>
    <name type="common">Human</name>
    <dbReference type="NCBI Taxonomy" id="9606"/>
</organismHost>
<organismHost>
    <name type="scientific">Phocidae</name>
    <name type="common">true seals</name>
    <dbReference type="NCBI Taxonomy" id="9709"/>
</organismHost>
<organismHost>
    <name type="scientific">Sus scrofa</name>
    <name type="common">Pig</name>
    <dbReference type="NCBI Taxonomy" id="9823"/>
</organismHost>